<proteinExistence type="inferred from homology"/>
<dbReference type="EMBL" id="DQ071615">
    <property type="protein sequence ID" value="AAZ67060.1"/>
    <property type="molecule type" value="Genomic_RNA"/>
</dbReference>
<dbReference type="SMR" id="Q3I5I6"/>
<dbReference type="Proteomes" id="UP000006570">
    <property type="component" value="Genome"/>
</dbReference>
<dbReference type="GO" id="GO:0044162">
    <property type="term" value="C:host cell cytoplasmic vesicle membrane"/>
    <property type="evidence" value="ECO:0007669"/>
    <property type="project" value="UniProtKB-SubCell"/>
</dbReference>
<dbReference type="GO" id="GO:0016020">
    <property type="term" value="C:membrane"/>
    <property type="evidence" value="ECO:0007669"/>
    <property type="project" value="UniProtKB-KW"/>
</dbReference>
<dbReference type="CDD" id="cd21955">
    <property type="entry name" value="SARS-CoV_ORF9b"/>
    <property type="match status" value="1"/>
</dbReference>
<dbReference type="InterPro" id="IPR018542">
    <property type="entry name" value="Protein_9b_Betacoronavirus"/>
</dbReference>
<dbReference type="InterPro" id="IPR037223">
    <property type="entry name" value="Protein_9b_SARS"/>
</dbReference>
<dbReference type="Pfam" id="PF09399">
    <property type="entry name" value="bCoV_lipid_BD"/>
    <property type="match status" value="1"/>
</dbReference>
<dbReference type="SUPFAM" id="SSF141666">
    <property type="entry name" value="SARS ORF9b-like"/>
    <property type="match status" value="1"/>
</dbReference>
<dbReference type="PROSITE" id="PS51920">
    <property type="entry name" value="SARS_9B"/>
    <property type="match status" value="1"/>
</dbReference>
<reference key="1">
    <citation type="journal article" date="2005" name="Science">
        <title>Bats are natural reservoirs of SARS-like coronaviruses.</title>
        <authorList>
            <person name="Li W."/>
            <person name="Shi Z."/>
            <person name="Yu M."/>
            <person name="Ren W."/>
            <person name="Smith C."/>
            <person name="Epstein J.H."/>
            <person name="Wang H."/>
            <person name="Crameri G."/>
            <person name="Hu Z."/>
            <person name="Zhang H."/>
            <person name="Zhang J."/>
            <person name="McEachern J."/>
            <person name="Field H."/>
            <person name="Daszak P."/>
            <person name="Eaton B.T."/>
            <person name="Zhang S."/>
            <person name="Wang L.F."/>
        </authorList>
    </citation>
    <scope>NUCLEOTIDE SEQUENCE [GENOMIC RNA]</scope>
</reference>
<organismHost>
    <name type="scientific">Rhinolophus ferrumequinum</name>
    <name type="common">Greater horseshoe bat</name>
    <dbReference type="NCBI Taxonomy" id="59479"/>
</organismHost>
<organismHost>
    <name type="scientific">Rhinolophus macrotis</name>
    <name type="common">Big-eared horseshoe bat</name>
    <dbReference type="NCBI Taxonomy" id="196889"/>
</organismHost>
<organismHost>
    <name type="scientific">Rhinolophus pearsonii</name>
    <dbReference type="NCBI Taxonomy" id="188571"/>
</organismHost>
<organismHost>
    <name type="scientific">Rhinolophus sinicus</name>
    <name type="common">Chinese rufous horseshoe bat</name>
    <dbReference type="NCBI Taxonomy" id="89399"/>
</organismHost>
<organism>
    <name type="scientific">Bat coronavirus Rp3/2004</name>
    <name type="common">BtCoV/Rp3/2004</name>
    <name type="synonym">SARS-like coronavirus Rp3</name>
    <dbReference type="NCBI Taxonomy" id="349344"/>
    <lineage>
        <taxon>Viruses</taxon>
        <taxon>Riboviria</taxon>
        <taxon>Orthornavirae</taxon>
        <taxon>Pisuviricota</taxon>
        <taxon>Pisoniviricetes</taxon>
        <taxon>Nidovirales</taxon>
        <taxon>Cornidovirineae</taxon>
        <taxon>Coronaviridae</taxon>
        <taxon>Orthocoronavirinae</taxon>
        <taxon>Betacoronavirus</taxon>
        <taxon>Sarbecovirus</taxon>
        <taxon>Severe acute respiratory syndrome coronavirus</taxon>
    </lineage>
</organism>
<gene>
    <name type="ORF">9b</name>
</gene>
<feature type="chain" id="PRO_0000106136" description="Protein 9b">
    <location>
        <begin position="1"/>
        <end position="97"/>
    </location>
</feature>
<feature type="domain" description="9b" evidence="2">
    <location>
        <begin position="8"/>
        <end position="97"/>
    </location>
</feature>
<comment type="subunit">
    <text evidence="1">Homodimer.</text>
</comment>
<comment type="subcellular location">
    <subcellularLocation>
        <location>Host cytoplasmic vesicle membrane</location>
        <topology>Peripheral membrane protein</topology>
    </subcellularLocation>
    <subcellularLocation>
        <location>Host cytoplasm</location>
    </subcellularLocation>
    <text evidence="1">Binds non-covalently to intracellular lipid bilayers.</text>
</comment>
<comment type="miscellaneous">
    <text>The gene encoding this protein is included within the N gene (alternative ORF).</text>
</comment>
<comment type="miscellaneous">
    <text>Bat coronavirus rp3 is highly similar to SARS-CoV (SARS-like).</text>
</comment>
<comment type="similarity">
    <text evidence="3">Belongs to the coronavirus group 2 protein 9b family.</text>
</comment>
<keyword id="KW-1035">Host cytoplasm</keyword>
<keyword id="KW-1036">Host cytoplasmic vesicle</keyword>
<keyword id="KW-1043">Host membrane</keyword>
<keyword id="KW-0472">Membrane</keyword>
<name>ORF9B_BCRP3</name>
<evidence type="ECO:0000250" key="1"/>
<evidence type="ECO:0000255" key="2">
    <source>
        <dbReference type="PROSITE-ProRule" id="PRU01268"/>
    </source>
</evidence>
<evidence type="ECO:0000305" key="3"/>
<sequence>MDPKTSVVLPALHLVDPQIQLTTTRMEDAVVHGQNNADLKVYPIILRLGSQLSLSMVRRNLDSLEVRVFQSTPIVVKMTKLATTEELPDEFVVVTAK</sequence>
<protein>
    <recommendedName>
        <fullName>Protein 9b</fullName>
    </recommendedName>
    <alternativeName>
        <fullName>Accessory protein 9b</fullName>
    </alternativeName>
    <alternativeName>
        <fullName>ORF-9b</fullName>
    </alternativeName>
</protein>
<accession>Q3I5I6</accession>